<name>PYRR_CORGL</name>
<sequence length="192" mass="20952">MSERNSAVLELLNEDDVSRTIARIAHQIIEKTALDSKDADRVMLLGIPSGGVPLARRLAEKIEEFSGVSVDTGAVDITLYRDDLRNKPHRALQPTSIPAGGIDNTTVILVDDVLFSGRTIRAALDALRDVGRPNYIQLAVLVDRGHRQLPIRADYVGKNLPTARAEDVSVMLTEIDGRDAVTLTREDSEGDS</sequence>
<gene>
    <name evidence="2" type="primary">pyrR</name>
    <name type="ordered locus">Cgl1613</name>
    <name type="ordered locus">cg1817</name>
</gene>
<comment type="function">
    <text evidence="2">Regulates the transcription of the pyrimidine nucleotide (pyr) operon in response to exogenous pyrimidines.</text>
</comment>
<comment type="function">
    <text evidence="2">Also displays a weak uracil phosphoribosyltransferase activity which is not physiologically significant.</text>
</comment>
<comment type="catalytic activity">
    <reaction evidence="2">
        <text>UMP + diphosphate = 5-phospho-alpha-D-ribose 1-diphosphate + uracil</text>
        <dbReference type="Rhea" id="RHEA:13017"/>
        <dbReference type="ChEBI" id="CHEBI:17568"/>
        <dbReference type="ChEBI" id="CHEBI:33019"/>
        <dbReference type="ChEBI" id="CHEBI:57865"/>
        <dbReference type="ChEBI" id="CHEBI:58017"/>
        <dbReference type="EC" id="2.4.2.9"/>
    </reaction>
</comment>
<comment type="similarity">
    <text evidence="2">Belongs to the purine/pyrimidine phosphoribosyltransferase family. PyrR subfamily.</text>
</comment>
<comment type="sequence caution" evidence="3">
    <conflict type="erroneous initiation">
        <sequence resource="EMBL-CDS" id="CAF21622"/>
    </conflict>
</comment>
<accession>P59011</accession>
<keyword id="KW-0328">Glycosyltransferase</keyword>
<keyword id="KW-1185">Reference proteome</keyword>
<keyword id="KW-0804">Transcription</keyword>
<keyword id="KW-0805">Transcription regulation</keyword>
<keyword id="KW-0808">Transferase</keyword>
<dbReference type="EC" id="2.4.2.9" evidence="2"/>
<dbReference type="EMBL" id="BA000036">
    <property type="protein sequence ID" value="BAB99006.1"/>
    <property type="molecule type" value="Genomic_DNA"/>
</dbReference>
<dbReference type="EMBL" id="BX927152">
    <property type="protein sequence ID" value="CAF21622.1"/>
    <property type="status" value="ALT_INIT"/>
    <property type="molecule type" value="Genomic_DNA"/>
</dbReference>
<dbReference type="RefSeq" id="NP_600827.1">
    <property type="nucleotide sequence ID" value="NC_003450.3"/>
</dbReference>
<dbReference type="RefSeq" id="WP_003862208.1">
    <property type="nucleotide sequence ID" value="NC_006958.1"/>
</dbReference>
<dbReference type="SMR" id="P59011"/>
<dbReference type="STRING" id="196627.cg1817"/>
<dbReference type="GeneID" id="1019582"/>
<dbReference type="KEGG" id="cgb:cg1817"/>
<dbReference type="KEGG" id="cgl:Cgl1613"/>
<dbReference type="PATRIC" id="fig|196627.13.peg.1575"/>
<dbReference type="eggNOG" id="COG2065">
    <property type="taxonomic scope" value="Bacteria"/>
</dbReference>
<dbReference type="HOGENOM" id="CLU_094234_2_1_11"/>
<dbReference type="OrthoDB" id="9802227at2"/>
<dbReference type="BioCyc" id="CORYNE:G18NG-11198-MONOMER"/>
<dbReference type="Proteomes" id="UP000000582">
    <property type="component" value="Chromosome"/>
</dbReference>
<dbReference type="Proteomes" id="UP000001009">
    <property type="component" value="Chromosome"/>
</dbReference>
<dbReference type="GO" id="GO:0004845">
    <property type="term" value="F:uracil phosphoribosyltransferase activity"/>
    <property type="evidence" value="ECO:0007669"/>
    <property type="project" value="UniProtKB-UniRule"/>
</dbReference>
<dbReference type="GO" id="GO:0006355">
    <property type="term" value="P:regulation of DNA-templated transcription"/>
    <property type="evidence" value="ECO:0007669"/>
    <property type="project" value="UniProtKB-UniRule"/>
</dbReference>
<dbReference type="CDD" id="cd06223">
    <property type="entry name" value="PRTases_typeI"/>
    <property type="match status" value="1"/>
</dbReference>
<dbReference type="FunFam" id="3.40.50.2020:FF:000020">
    <property type="entry name" value="Bifunctional protein PyrR"/>
    <property type="match status" value="1"/>
</dbReference>
<dbReference type="Gene3D" id="3.40.50.2020">
    <property type="match status" value="1"/>
</dbReference>
<dbReference type="HAMAP" id="MF_01219">
    <property type="entry name" value="PyrR"/>
    <property type="match status" value="1"/>
</dbReference>
<dbReference type="InterPro" id="IPR000836">
    <property type="entry name" value="PRibTrfase_dom"/>
</dbReference>
<dbReference type="InterPro" id="IPR029057">
    <property type="entry name" value="PRTase-like"/>
</dbReference>
<dbReference type="InterPro" id="IPR023050">
    <property type="entry name" value="PyrR"/>
</dbReference>
<dbReference type="InterPro" id="IPR050137">
    <property type="entry name" value="PyrR_bifunctional"/>
</dbReference>
<dbReference type="NCBIfam" id="NF003547">
    <property type="entry name" value="PRK05205.1-3"/>
    <property type="match status" value="1"/>
</dbReference>
<dbReference type="NCBIfam" id="NF003549">
    <property type="entry name" value="PRK05205.1-5"/>
    <property type="match status" value="1"/>
</dbReference>
<dbReference type="PANTHER" id="PTHR11608">
    <property type="entry name" value="BIFUNCTIONAL PROTEIN PYRR"/>
    <property type="match status" value="1"/>
</dbReference>
<dbReference type="PANTHER" id="PTHR11608:SF0">
    <property type="entry name" value="BIFUNCTIONAL PROTEIN PYRR"/>
    <property type="match status" value="1"/>
</dbReference>
<dbReference type="Pfam" id="PF00156">
    <property type="entry name" value="Pribosyltran"/>
    <property type="match status" value="1"/>
</dbReference>
<dbReference type="SUPFAM" id="SSF53271">
    <property type="entry name" value="PRTase-like"/>
    <property type="match status" value="1"/>
</dbReference>
<evidence type="ECO:0000250" key="1"/>
<evidence type="ECO:0000255" key="2">
    <source>
        <dbReference type="HAMAP-Rule" id="MF_01219"/>
    </source>
</evidence>
<evidence type="ECO:0000305" key="3"/>
<protein>
    <recommendedName>
        <fullName evidence="2">Bifunctional protein PyrR</fullName>
    </recommendedName>
    <domain>
        <recommendedName>
            <fullName evidence="2">Pyrimidine operon regulatory protein</fullName>
        </recommendedName>
    </domain>
    <domain>
        <recommendedName>
            <fullName evidence="2">Uracil phosphoribosyltransferase</fullName>
            <shortName evidence="2">UPRTase</shortName>
            <ecNumber evidence="2">2.4.2.9</ecNumber>
        </recommendedName>
    </domain>
</protein>
<organism>
    <name type="scientific">Corynebacterium glutamicum (strain ATCC 13032 / DSM 20300 / JCM 1318 / BCRC 11384 / CCUG 27702 / LMG 3730 / NBRC 12168 / NCIMB 10025 / NRRL B-2784 / 534)</name>
    <dbReference type="NCBI Taxonomy" id="196627"/>
    <lineage>
        <taxon>Bacteria</taxon>
        <taxon>Bacillati</taxon>
        <taxon>Actinomycetota</taxon>
        <taxon>Actinomycetes</taxon>
        <taxon>Mycobacteriales</taxon>
        <taxon>Corynebacteriaceae</taxon>
        <taxon>Corynebacterium</taxon>
    </lineage>
</organism>
<feature type="chain" id="PRO_0000183033" description="Bifunctional protein PyrR">
    <location>
        <begin position="1"/>
        <end position="192"/>
    </location>
</feature>
<feature type="short sequence motif" description="PRPP-binding" evidence="2">
    <location>
        <begin position="107"/>
        <end position="119"/>
    </location>
</feature>
<feature type="binding site" description="in other chain" evidence="1">
    <location>
        <begin position="49"/>
        <end position="50"/>
    </location>
    <ligand>
        <name>substrate</name>
        <note>ligand shared between dimeric partners</note>
    </ligand>
</feature>
<feature type="binding site" evidence="1">
    <location>
        <position position="90"/>
    </location>
    <ligand>
        <name>substrate</name>
        <note>ligand shared between dimeric partners</note>
    </ligand>
</feature>
<feature type="binding site" description="in other chain" evidence="1">
    <location>
        <begin position="111"/>
        <end position="119"/>
    </location>
    <ligand>
        <name>substrate</name>
        <note>ligand shared between dimeric partners</note>
    </ligand>
</feature>
<feature type="binding site" description="in other chain" evidence="1">
    <location>
        <position position="144"/>
    </location>
    <ligand>
        <name>substrate</name>
        <note>ligand shared between dimeric partners</note>
    </ligand>
</feature>
<feature type="binding site" description="in other chain" evidence="1">
    <location>
        <position position="168"/>
    </location>
    <ligand>
        <name>substrate</name>
        <note>ligand shared between dimeric partners</note>
    </ligand>
</feature>
<reference key="1">
    <citation type="journal article" date="2003" name="Appl. Microbiol. Biotechnol.">
        <title>The Corynebacterium glutamicum genome: features and impacts on biotechnological processes.</title>
        <authorList>
            <person name="Ikeda M."/>
            <person name="Nakagawa S."/>
        </authorList>
    </citation>
    <scope>NUCLEOTIDE SEQUENCE [LARGE SCALE GENOMIC DNA]</scope>
    <source>
        <strain>ATCC 13032 / DSM 20300 / JCM 1318 / BCRC 11384 / CCUG 27702 / LMG 3730 / NBRC 12168 / NCIMB 10025 / NRRL B-2784 / 534</strain>
    </source>
</reference>
<reference key="2">
    <citation type="journal article" date="2003" name="J. Biotechnol.">
        <title>The complete Corynebacterium glutamicum ATCC 13032 genome sequence and its impact on the production of L-aspartate-derived amino acids and vitamins.</title>
        <authorList>
            <person name="Kalinowski J."/>
            <person name="Bathe B."/>
            <person name="Bartels D."/>
            <person name="Bischoff N."/>
            <person name="Bott M."/>
            <person name="Burkovski A."/>
            <person name="Dusch N."/>
            <person name="Eggeling L."/>
            <person name="Eikmanns B.J."/>
            <person name="Gaigalat L."/>
            <person name="Goesmann A."/>
            <person name="Hartmann M."/>
            <person name="Huthmacher K."/>
            <person name="Kraemer R."/>
            <person name="Linke B."/>
            <person name="McHardy A.C."/>
            <person name="Meyer F."/>
            <person name="Moeckel B."/>
            <person name="Pfefferle W."/>
            <person name="Puehler A."/>
            <person name="Rey D.A."/>
            <person name="Rueckert C."/>
            <person name="Rupp O."/>
            <person name="Sahm H."/>
            <person name="Wendisch V.F."/>
            <person name="Wiegraebe I."/>
            <person name="Tauch A."/>
        </authorList>
    </citation>
    <scope>NUCLEOTIDE SEQUENCE [LARGE SCALE GENOMIC DNA]</scope>
    <source>
        <strain>ATCC 13032 / DSM 20300 / JCM 1318 / BCRC 11384 / CCUG 27702 / LMG 3730 / NBRC 12168 / NCIMB 10025 / NRRL B-2784 / 534</strain>
    </source>
</reference>
<proteinExistence type="inferred from homology"/>